<accession>C9SDH0</accession>
<keyword id="KW-0496">Mitochondrion</keyword>
<keyword id="KW-1185">Reference proteome</keyword>
<keyword id="KW-0809">Transit peptide</keyword>
<protein>
    <recommendedName>
        <fullName>Altered inheritance of mitochondria protein 24, mitochondrial</fullName>
    </recommendedName>
</protein>
<comment type="subcellular location">
    <subcellularLocation>
        <location evidence="1">Mitochondrion</location>
    </subcellularLocation>
</comment>
<comment type="similarity">
    <text evidence="3">Belongs to the AIM24 family.</text>
</comment>
<evidence type="ECO:0000250" key="1"/>
<evidence type="ECO:0000255" key="2"/>
<evidence type="ECO:0000305" key="3"/>
<reference key="1">
    <citation type="journal article" date="2011" name="PLoS Pathog.">
        <title>Comparative genomics yields insights into niche adaptation of plant vascular wilt pathogens.</title>
        <authorList>
            <person name="Klosterman S.J."/>
            <person name="Subbarao K.V."/>
            <person name="Kang S."/>
            <person name="Veronese P."/>
            <person name="Gold S.E."/>
            <person name="Thomma B.P.H.J."/>
            <person name="Chen Z."/>
            <person name="Henrissat B."/>
            <person name="Lee Y.-H."/>
            <person name="Park J."/>
            <person name="Garcia-Pedrajas M.D."/>
            <person name="Barbara D.J."/>
            <person name="Anchieta A."/>
            <person name="de Jonge R."/>
            <person name="Santhanam P."/>
            <person name="Maruthachalam K."/>
            <person name="Atallah Z."/>
            <person name="Amyotte S.G."/>
            <person name="Paz Z."/>
            <person name="Inderbitzin P."/>
            <person name="Hayes R.J."/>
            <person name="Heiman D.I."/>
            <person name="Young S."/>
            <person name="Zeng Q."/>
            <person name="Engels R."/>
            <person name="Galagan J."/>
            <person name="Cuomo C.A."/>
            <person name="Dobinson K.F."/>
            <person name="Ma L.-J."/>
        </authorList>
    </citation>
    <scope>NUCLEOTIDE SEQUENCE [LARGE SCALE GENOMIC DNA]</scope>
    <source>
        <strain>VaMs.102 / ATCC MYA-4576 / FGSC 10136</strain>
    </source>
</reference>
<proteinExistence type="inferred from homology"/>
<organism>
    <name type="scientific">Verticillium alfalfae (strain VaMs.102 / ATCC MYA-4576 / FGSC 10136)</name>
    <name type="common">Verticillium wilt of alfalfa</name>
    <name type="synonym">Verticillium albo-atrum</name>
    <dbReference type="NCBI Taxonomy" id="526221"/>
    <lineage>
        <taxon>Eukaryota</taxon>
        <taxon>Fungi</taxon>
        <taxon>Dikarya</taxon>
        <taxon>Ascomycota</taxon>
        <taxon>Pezizomycotina</taxon>
        <taxon>Sordariomycetes</taxon>
        <taxon>Hypocreomycetidae</taxon>
        <taxon>Glomerellales</taxon>
        <taxon>Plectosphaerellaceae</taxon>
        <taxon>Verticillium</taxon>
    </lineage>
</organism>
<gene>
    <name type="primary">AIM24</name>
    <name type="ORF">VDBG_03231</name>
</gene>
<name>AIM24_VERA1</name>
<feature type="transit peptide" description="Mitochondrion" evidence="2">
    <location>
        <begin position="1"/>
        <end position="37"/>
    </location>
</feature>
<feature type="chain" id="PRO_0000399595" description="Altered inheritance of mitochondria protein 24, mitochondrial">
    <location>
        <begin position="38"/>
        <end position="380"/>
    </location>
</feature>
<dbReference type="EMBL" id="DS985216">
    <property type="protein sequence ID" value="EEY17122.1"/>
    <property type="molecule type" value="Genomic_DNA"/>
</dbReference>
<dbReference type="RefSeq" id="XP_003007092.1">
    <property type="nucleotide sequence ID" value="XM_003007046.1"/>
</dbReference>
<dbReference type="GeneID" id="9533252"/>
<dbReference type="KEGG" id="val:VDBG_03231"/>
<dbReference type="eggNOG" id="ENOG502RXC5">
    <property type="taxonomic scope" value="Eukaryota"/>
</dbReference>
<dbReference type="HOGENOM" id="CLU_046558_0_0_1"/>
<dbReference type="OMA" id="QTRCVQI"/>
<dbReference type="OrthoDB" id="5295771at2759"/>
<dbReference type="Proteomes" id="UP000008698">
    <property type="component" value="Unassembled WGS sequence"/>
</dbReference>
<dbReference type="GO" id="GO:0005743">
    <property type="term" value="C:mitochondrial inner membrane"/>
    <property type="evidence" value="ECO:0007669"/>
    <property type="project" value="TreeGrafter"/>
</dbReference>
<dbReference type="GO" id="GO:0007007">
    <property type="term" value="P:inner mitochondrial membrane organization"/>
    <property type="evidence" value="ECO:0007669"/>
    <property type="project" value="TreeGrafter"/>
</dbReference>
<dbReference type="Gene3D" id="3.60.160.10">
    <property type="entry name" value="Mitochondrial biogenesis AIM24"/>
    <property type="match status" value="1"/>
</dbReference>
<dbReference type="InterPro" id="IPR002838">
    <property type="entry name" value="AIM24"/>
</dbReference>
<dbReference type="InterPro" id="IPR036983">
    <property type="entry name" value="AIM24_sf"/>
</dbReference>
<dbReference type="InterPro" id="IPR016031">
    <property type="entry name" value="Trp_RNA-bd_attenuator-like_dom"/>
</dbReference>
<dbReference type="PANTHER" id="PTHR36959">
    <property type="entry name" value="ALTERED INHERITANCE OF MITOCHONDRIA PROTEIN 24, MITOCHONDRIAL"/>
    <property type="match status" value="1"/>
</dbReference>
<dbReference type="PANTHER" id="PTHR36959:SF2">
    <property type="entry name" value="ALTERED INHERITANCE OF MITOCHONDRIA PROTEIN 24, MITOCHONDRIAL"/>
    <property type="match status" value="1"/>
</dbReference>
<dbReference type="Pfam" id="PF01987">
    <property type="entry name" value="AIM24"/>
    <property type="match status" value="1"/>
</dbReference>
<dbReference type="SUPFAM" id="SSF51219">
    <property type="entry name" value="TRAP-like"/>
    <property type="match status" value="1"/>
</dbReference>
<sequence>MHGQSPLIRTARGLRTVKTRPSSCRQCRTIQISAAPTTETPRIGGDAFGLPANTSVHDVADARFEVLGSPYSMLSVTLSPSQKLYTRRGTLVGVAGQADNAQSTLSILSPFSRAFLGIPFLYQRISSSTPLTALISTKSPTTTFSILHLDGTTDYMVAQRNALLAWTGHTLLLSPRVSRGLSLAHWGSTHLSGRGLAALSSPGQIYQLTLGDGEEFVAHPSHVVAYSVSRNPPLPFRLKSSSFRLQIPSVTGLFPETKFFKTMRDTDTYKAIGRFLFSLRTSMRRTIWGDRLFLQFRGPTTLLMSSRGVRVADVLTNQEVNEISDAQAGVVPKAVELSSQPKAVEAASTEQAPSAIHIASVAKDGKVSFEDAKDLKEFVR</sequence>